<name>NUON1_THEYD</name>
<gene>
    <name evidence="1" type="primary">nuoN1</name>
    <name type="ordered locus">THEYE_A0921</name>
</gene>
<evidence type="ECO:0000255" key="1">
    <source>
        <dbReference type="HAMAP-Rule" id="MF_00445"/>
    </source>
</evidence>
<reference key="1">
    <citation type="submission" date="2008-08" db="EMBL/GenBank/DDBJ databases">
        <title>The complete genome sequence of Thermodesulfovibrio yellowstonii strain ATCC 51303 / DSM 11347 / YP87.</title>
        <authorList>
            <person name="Dodson R.J."/>
            <person name="Durkin A.S."/>
            <person name="Wu M."/>
            <person name="Eisen J."/>
            <person name="Sutton G."/>
        </authorList>
    </citation>
    <scope>NUCLEOTIDE SEQUENCE [LARGE SCALE GENOMIC DNA]</scope>
    <source>
        <strain>ATCC 51303 / DSM 11347 / YP87</strain>
    </source>
</reference>
<dbReference type="EC" id="7.1.1.-" evidence="1"/>
<dbReference type="EMBL" id="CP001147">
    <property type="protein sequence ID" value="ACI21104.1"/>
    <property type="molecule type" value="Genomic_DNA"/>
</dbReference>
<dbReference type="RefSeq" id="WP_012545829.1">
    <property type="nucleotide sequence ID" value="NC_011296.1"/>
</dbReference>
<dbReference type="RefSeq" id="YP_002248757.1">
    <property type="nucleotide sequence ID" value="NC_011296.1"/>
</dbReference>
<dbReference type="SMR" id="B5YKJ2"/>
<dbReference type="FunCoup" id="B5YKJ2">
    <property type="interactions" value="124"/>
</dbReference>
<dbReference type="STRING" id="289376.THEYE_A0921"/>
<dbReference type="EnsemblBacteria" id="ACI21104">
    <property type="protein sequence ID" value="ACI21104"/>
    <property type="gene ID" value="THEYE_A0921"/>
</dbReference>
<dbReference type="KEGG" id="tye:THEYE_A0921"/>
<dbReference type="PATRIC" id="fig|289376.4.peg.907"/>
<dbReference type="eggNOG" id="COG1007">
    <property type="taxonomic scope" value="Bacteria"/>
</dbReference>
<dbReference type="HOGENOM" id="CLU_007100_1_3_0"/>
<dbReference type="InParanoid" id="B5YKJ2"/>
<dbReference type="OrthoDB" id="9807568at2"/>
<dbReference type="Proteomes" id="UP000000718">
    <property type="component" value="Chromosome"/>
</dbReference>
<dbReference type="GO" id="GO:0005886">
    <property type="term" value="C:plasma membrane"/>
    <property type="evidence" value="ECO:0007669"/>
    <property type="project" value="UniProtKB-SubCell"/>
</dbReference>
<dbReference type="GO" id="GO:0008137">
    <property type="term" value="F:NADH dehydrogenase (ubiquinone) activity"/>
    <property type="evidence" value="ECO:0007669"/>
    <property type="project" value="InterPro"/>
</dbReference>
<dbReference type="GO" id="GO:0050136">
    <property type="term" value="F:NADH:ubiquinone reductase (non-electrogenic) activity"/>
    <property type="evidence" value="ECO:0007669"/>
    <property type="project" value="UniProtKB-UniRule"/>
</dbReference>
<dbReference type="GO" id="GO:0048038">
    <property type="term" value="F:quinone binding"/>
    <property type="evidence" value="ECO:0007669"/>
    <property type="project" value="UniProtKB-KW"/>
</dbReference>
<dbReference type="GO" id="GO:0042773">
    <property type="term" value="P:ATP synthesis coupled electron transport"/>
    <property type="evidence" value="ECO:0007669"/>
    <property type="project" value="InterPro"/>
</dbReference>
<dbReference type="HAMAP" id="MF_00445">
    <property type="entry name" value="NDH1_NuoN_1"/>
    <property type="match status" value="1"/>
</dbReference>
<dbReference type="InterPro" id="IPR010096">
    <property type="entry name" value="NADH-Q_OxRdtase_suN/2"/>
</dbReference>
<dbReference type="InterPro" id="IPR001750">
    <property type="entry name" value="ND/Mrp_TM"/>
</dbReference>
<dbReference type="NCBIfam" id="TIGR01770">
    <property type="entry name" value="NDH_I_N"/>
    <property type="match status" value="1"/>
</dbReference>
<dbReference type="PANTHER" id="PTHR22773">
    <property type="entry name" value="NADH DEHYDROGENASE"/>
    <property type="match status" value="1"/>
</dbReference>
<dbReference type="Pfam" id="PF00361">
    <property type="entry name" value="Proton_antipo_M"/>
    <property type="match status" value="1"/>
</dbReference>
<dbReference type="PRINTS" id="PR01434">
    <property type="entry name" value="NADHDHGNASE5"/>
</dbReference>
<keyword id="KW-0997">Cell inner membrane</keyword>
<keyword id="KW-1003">Cell membrane</keyword>
<keyword id="KW-0472">Membrane</keyword>
<keyword id="KW-0520">NAD</keyword>
<keyword id="KW-0874">Quinone</keyword>
<keyword id="KW-1185">Reference proteome</keyword>
<keyword id="KW-1278">Translocase</keyword>
<keyword id="KW-0812">Transmembrane</keyword>
<keyword id="KW-1133">Transmembrane helix</keyword>
<keyword id="KW-0813">Transport</keyword>
<keyword id="KW-0830">Ubiquinone</keyword>
<accession>B5YKJ2</accession>
<proteinExistence type="inferred from homology"/>
<comment type="function">
    <text evidence="1">NDH-1 shuttles electrons from NADH, via FMN and iron-sulfur (Fe-S) centers, to quinones in the respiratory chain. The immediate electron acceptor for the enzyme in this species is believed to be ubiquinone. Couples the redox reaction to proton translocation (for every two electrons transferred, four hydrogen ions are translocated across the cytoplasmic membrane), and thus conserves the redox energy in a proton gradient.</text>
</comment>
<comment type="catalytic activity">
    <reaction evidence="1">
        <text>a quinone + NADH + 5 H(+)(in) = a quinol + NAD(+) + 4 H(+)(out)</text>
        <dbReference type="Rhea" id="RHEA:57888"/>
        <dbReference type="ChEBI" id="CHEBI:15378"/>
        <dbReference type="ChEBI" id="CHEBI:24646"/>
        <dbReference type="ChEBI" id="CHEBI:57540"/>
        <dbReference type="ChEBI" id="CHEBI:57945"/>
        <dbReference type="ChEBI" id="CHEBI:132124"/>
    </reaction>
</comment>
<comment type="subunit">
    <text evidence="1">NDH-1 is composed of 14 different subunits. Subunits NuoA, H, J, K, L, M, N constitute the membrane sector of the complex.</text>
</comment>
<comment type="subcellular location">
    <subcellularLocation>
        <location evidence="1">Cell inner membrane</location>
        <topology evidence="1">Multi-pass membrane protein</topology>
    </subcellularLocation>
</comment>
<comment type="similarity">
    <text evidence="1">Belongs to the complex I subunit 2 family.</text>
</comment>
<sequence>MNISQIPLQVEALIPEITLTGFASLILLAGLLKLKNEVLVWSSVLFLVIFAFFIPSFEGEAFNGMFLNDFLTIYLKLIIIIGTIISLLVLTSYLKEKLIRFNESIAFILFSALGMMLLVSARELISFFLSFELMSLSIYVLVGIRRYDVKSNEAAVKYFMLGGFSSAIMLFGIAFIYGATNTTELSLILKVISNYNPLILIGLGLFIVGLCFKIALVPFHMWAPDVYEGAPTPVTAFISTLPKVAILGAFGRVLVEIFRDYYIDWSNFLIVLSIATMATGNFFALIQKNIKRMLAYSSIAHAGYIIIGVIVGTQSGFNSVVAYMFIYTLMNIGAFAMVIAFNEESIENYKGLHKFHPALAIAMLIFMFSLTGVPPTAGFIVKFNIFLQAVKAGFTWLVVIAVIFTVISAYYYLRIVMYMYMKEPVKLPEPIYSRELEVAILICTIGVTFLGILPLFLI</sequence>
<protein>
    <recommendedName>
        <fullName evidence="1">NADH-quinone oxidoreductase subunit N 1</fullName>
        <ecNumber evidence="1">7.1.1.-</ecNumber>
    </recommendedName>
    <alternativeName>
        <fullName evidence="1">NADH dehydrogenase I subunit N 1</fullName>
    </alternativeName>
    <alternativeName>
        <fullName evidence="1">NDH-1 subunit N 1</fullName>
    </alternativeName>
</protein>
<organism>
    <name type="scientific">Thermodesulfovibrio yellowstonii (strain ATCC 51303 / DSM 11347 / YP87)</name>
    <dbReference type="NCBI Taxonomy" id="289376"/>
    <lineage>
        <taxon>Bacteria</taxon>
        <taxon>Pseudomonadati</taxon>
        <taxon>Nitrospirota</taxon>
        <taxon>Thermodesulfovibrionia</taxon>
        <taxon>Thermodesulfovibrionales</taxon>
        <taxon>Thermodesulfovibrionaceae</taxon>
        <taxon>Thermodesulfovibrio</taxon>
    </lineage>
</organism>
<feature type="chain" id="PRO_0000391239" description="NADH-quinone oxidoreductase subunit N 1">
    <location>
        <begin position="1"/>
        <end position="458"/>
    </location>
</feature>
<feature type="transmembrane region" description="Helical" evidence="1">
    <location>
        <begin position="12"/>
        <end position="32"/>
    </location>
</feature>
<feature type="transmembrane region" description="Helical" evidence="1">
    <location>
        <begin position="37"/>
        <end position="57"/>
    </location>
</feature>
<feature type="transmembrane region" description="Helical" evidence="1">
    <location>
        <begin position="70"/>
        <end position="90"/>
    </location>
</feature>
<feature type="transmembrane region" description="Helical" evidence="1">
    <location>
        <begin position="101"/>
        <end position="121"/>
    </location>
</feature>
<feature type="transmembrane region" description="Helical" evidence="1">
    <location>
        <begin position="124"/>
        <end position="144"/>
    </location>
</feature>
<feature type="transmembrane region" description="Helical" evidence="1">
    <location>
        <begin position="159"/>
        <end position="179"/>
    </location>
</feature>
<feature type="transmembrane region" description="Helical" evidence="1">
    <location>
        <begin position="199"/>
        <end position="219"/>
    </location>
</feature>
<feature type="transmembrane region" description="Helical" evidence="1">
    <location>
        <begin position="230"/>
        <end position="250"/>
    </location>
</feature>
<feature type="transmembrane region" description="Helical" evidence="1">
    <location>
        <begin position="266"/>
        <end position="286"/>
    </location>
</feature>
<feature type="transmembrane region" description="Helical" evidence="1">
    <location>
        <begin position="293"/>
        <end position="313"/>
    </location>
</feature>
<feature type="transmembrane region" description="Helical" evidence="1">
    <location>
        <begin position="321"/>
        <end position="341"/>
    </location>
</feature>
<feature type="transmembrane region" description="Helical" evidence="1">
    <location>
        <begin position="361"/>
        <end position="381"/>
    </location>
</feature>
<feature type="transmembrane region" description="Helical" evidence="1">
    <location>
        <begin position="393"/>
        <end position="413"/>
    </location>
</feature>
<feature type="transmembrane region" description="Helical" evidence="1">
    <location>
        <begin position="438"/>
        <end position="458"/>
    </location>
</feature>